<accession>P0ADU5</accession>
<accession>P52083</accession>
<accession>Q2M9H6</accession>
<sequence>MKKFAAVIAVMALCSAPVMAAEQGGFSGPSATQSQAGGFQGPNGSVTTVESAKSLRDDTWVTLRGNIVERISDDLYVFKDASGTINVDIDHKRWNGVTVTPKDTVEIQGEVDKDWNSVEIDVKQIRKVNP</sequence>
<dbReference type="EMBL" id="U28377">
    <property type="protein sequence ID" value="AAA69192.1"/>
    <property type="molecule type" value="Genomic_DNA"/>
</dbReference>
<dbReference type="EMBL" id="U00096">
    <property type="protein sequence ID" value="AAC76060.1"/>
    <property type="molecule type" value="Genomic_DNA"/>
</dbReference>
<dbReference type="EMBL" id="AP009048">
    <property type="protein sequence ID" value="BAE77080.1"/>
    <property type="molecule type" value="Genomic_DNA"/>
</dbReference>
<dbReference type="PIR" id="F65089">
    <property type="entry name" value="F65089"/>
</dbReference>
<dbReference type="RefSeq" id="NP_417496.1">
    <property type="nucleotide sequence ID" value="NC_000913.3"/>
</dbReference>
<dbReference type="RefSeq" id="WP_000712658.1">
    <property type="nucleotide sequence ID" value="NZ_STEB01000001.1"/>
</dbReference>
<dbReference type="PDB" id="1NNX">
    <property type="method" value="X-ray"/>
    <property type="resolution" value="1.45 A"/>
    <property type="chains" value="A=22-130"/>
</dbReference>
<dbReference type="PDBsum" id="1NNX"/>
<dbReference type="SMR" id="P0ADU5"/>
<dbReference type="BioGRID" id="4259249">
    <property type="interactions" value="15"/>
</dbReference>
<dbReference type="DIP" id="DIP-47914N"/>
<dbReference type="FunCoup" id="P0ADU5">
    <property type="interactions" value="120"/>
</dbReference>
<dbReference type="IntAct" id="P0ADU5">
    <property type="interactions" value="2"/>
</dbReference>
<dbReference type="STRING" id="511145.b3024"/>
<dbReference type="jPOST" id="P0ADU5"/>
<dbReference type="PaxDb" id="511145-b3024"/>
<dbReference type="EnsemblBacteria" id="AAC76060">
    <property type="protein sequence ID" value="AAC76060"/>
    <property type="gene ID" value="b3024"/>
</dbReference>
<dbReference type="GeneID" id="93778968"/>
<dbReference type="GeneID" id="946051"/>
<dbReference type="KEGG" id="ecj:JW2992"/>
<dbReference type="KEGG" id="eco:b3024"/>
<dbReference type="KEGG" id="ecoc:C3026_16520"/>
<dbReference type="PATRIC" id="fig|511145.12.peg.3117"/>
<dbReference type="EchoBASE" id="EB2843"/>
<dbReference type="eggNOG" id="COG3111">
    <property type="taxonomic scope" value="Bacteria"/>
</dbReference>
<dbReference type="HOGENOM" id="CLU_118907_1_0_6"/>
<dbReference type="InParanoid" id="P0ADU5"/>
<dbReference type="OMA" id="KHLMSRE"/>
<dbReference type="OrthoDB" id="598245at2"/>
<dbReference type="PhylomeDB" id="P0ADU5"/>
<dbReference type="BioCyc" id="EcoCyc:G7574-MONOMER"/>
<dbReference type="EvolutionaryTrace" id="P0ADU5"/>
<dbReference type="PRO" id="PR:P0ADU5"/>
<dbReference type="Proteomes" id="UP000000625">
    <property type="component" value="Chromosome"/>
</dbReference>
<dbReference type="GO" id="GO:0030288">
    <property type="term" value="C:outer membrane-bounded periplasmic space"/>
    <property type="evidence" value="ECO:0000269"/>
    <property type="project" value="EcoCyc"/>
</dbReference>
<dbReference type="GO" id="GO:0071276">
    <property type="term" value="P:cellular response to cadmium ion"/>
    <property type="evidence" value="ECO:0000315"/>
    <property type="project" value="EcoCyc"/>
</dbReference>
<dbReference type="GO" id="GO:0070301">
    <property type="term" value="P:cellular response to hydrogen peroxide"/>
    <property type="evidence" value="ECO:0000315"/>
    <property type="project" value="EcoCyc"/>
</dbReference>
<dbReference type="GO" id="GO:0044011">
    <property type="term" value="P:single-species biofilm formation on inanimate substrate"/>
    <property type="evidence" value="ECO:0000315"/>
    <property type="project" value="EcoCyc"/>
</dbReference>
<dbReference type="FunFam" id="2.40.50.200:FF:000001">
    <property type="entry name" value="TIGR00156 family protein"/>
    <property type="match status" value="1"/>
</dbReference>
<dbReference type="Gene3D" id="2.40.50.200">
    <property type="entry name" value="Bacterial OB-fold"/>
    <property type="match status" value="1"/>
</dbReference>
<dbReference type="InterPro" id="IPR036700">
    <property type="entry name" value="BOBF_sf"/>
</dbReference>
<dbReference type="InterPro" id="IPR005220">
    <property type="entry name" value="BOF"/>
</dbReference>
<dbReference type="InterPro" id="IPR052401">
    <property type="entry name" value="Ca-regulated_OB-fold"/>
</dbReference>
<dbReference type="InterPro" id="IPR016052">
    <property type="entry name" value="YgiW/YdeI"/>
</dbReference>
<dbReference type="NCBIfam" id="NF033674">
    <property type="entry name" value="stress_OB_fold"/>
    <property type="match status" value="1"/>
</dbReference>
<dbReference type="NCBIfam" id="TIGR00156">
    <property type="entry name" value="YgiW/YdeI family stress tolerance OB fold protein"/>
    <property type="match status" value="1"/>
</dbReference>
<dbReference type="PANTHER" id="PTHR36571">
    <property type="entry name" value="PROTEIN YGIW"/>
    <property type="match status" value="1"/>
</dbReference>
<dbReference type="PANTHER" id="PTHR36571:SF1">
    <property type="entry name" value="PROTEIN YGIW"/>
    <property type="match status" value="1"/>
</dbReference>
<dbReference type="Pfam" id="PF04076">
    <property type="entry name" value="BOF"/>
    <property type="match status" value="1"/>
</dbReference>
<dbReference type="SUPFAM" id="SSF101756">
    <property type="entry name" value="Hypothetical protein YgiW"/>
    <property type="match status" value="1"/>
</dbReference>
<feature type="signal peptide" evidence="2">
    <location>
        <begin position="1"/>
        <end position="20"/>
    </location>
</feature>
<feature type="chain" id="PRO_0000013902" description="Protein YgiW">
    <location>
        <begin position="21"/>
        <end position="130"/>
    </location>
</feature>
<feature type="region of interest" description="Disordered" evidence="1">
    <location>
        <begin position="25"/>
        <end position="44"/>
    </location>
</feature>
<feature type="compositionally biased region" description="Polar residues" evidence="1">
    <location>
        <begin position="29"/>
        <end position="44"/>
    </location>
</feature>
<feature type="helix" evidence="4">
    <location>
        <begin position="49"/>
        <end position="52"/>
    </location>
</feature>
<feature type="strand" evidence="4">
    <location>
        <begin position="57"/>
        <end position="72"/>
    </location>
</feature>
<feature type="strand" evidence="4">
    <location>
        <begin position="75"/>
        <end position="80"/>
    </location>
</feature>
<feature type="strand" evidence="4">
    <location>
        <begin position="83"/>
        <end position="88"/>
    </location>
</feature>
<feature type="helix" evidence="4">
    <location>
        <begin position="91"/>
        <end position="93"/>
    </location>
</feature>
<feature type="strand" evidence="4">
    <location>
        <begin position="103"/>
        <end position="114"/>
    </location>
</feature>
<feature type="strand" evidence="4">
    <location>
        <begin position="117"/>
        <end position="128"/>
    </location>
</feature>
<comment type="subcellular location">
    <subcellularLocation>
        <location evidence="3">Periplasm</location>
    </subcellularLocation>
</comment>
<comment type="similarity">
    <text evidence="3">To H.influenzae HI_1709.</text>
</comment>
<name>YGIW_ECOLI</name>
<reference key="1">
    <citation type="journal article" date="1997" name="Science">
        <title>The complete genome sequence of Escherichia coli K-12.</title>
        <authorList>
            <person name="Blattner F.R."/>
            <person name="Plunkett G. III"/>
            <person name="Bloch C.A."/>
            <person name="Perna N.T."/>
            <person name="Burland V."/>
            <person name="Riley M."/>
            <person name="Collado-Vides J."/>
            <person name="Glasner J.D."/>
            <person name="Rode C.K."/>
            <person name="Mayhew G.F."/>
            <person name="Gregor J."/>
            <person name="Davis N.W."/>
            <person name="Kirkpatrick H.A."/>
            <person name="Goeden M.A."/>
            <person name="Rose D.J."/>
            <person name="Mau B."/>
            <person name="Shao Y."/>
        </authorList>
    </citation>
    <scope>NUCLEOTIDE SEQUENCE [LARGE SCALE GENOMIC DNA]</scope>
    <source>
        <strain>K12 / MG1655 / ATCC 47076</strain>
    </source>
</reference>
<reference key="2">
    <citation type="journal article" date="2006" name="Mol. Syst. Biol.">
        <title>Highly accurate genome sequences of Escherichia coli K-12 strains MG1655 and W3110.</title>
        <authorList>
            <person name="Hayashi K."/>
            <person name="Morooka N."/>
            <person name="Yamamoto Y."/>
            <person name="Fujita K."/>
            <person name="Isono K."/>
            <person name="Choi S."/>
            <person name="Ohtsubo E."/>
            <person name="Baba T."/>
            <person name="Wanner B.L."/>
            <person name="Mori H."/>
            <person name="Horiuchi T."/>
        </authorList>
    </citation>
    <scope>NUCLEOTIDE SEQUENCE [LARGE SCALE GENOMIC DNA]</scope>
    <source>
        <strain>K12 / W3110 / ATCC 27325 / DSM 5911</strain>
    </source>
</reference>
<reference key="3">
    <citation type="journal article" date="1997" name="Electrophoresis">
        <title>Comparing the predicted and observed properties of proteins encoded in the genome of Escherichia coli K-12.</title>
        <authorList>
            <person name="Link A.J."/>
            <person name="Robison K."/>
            <person name="Church G.M."/>
        </authorList>
    </citation>
    <scope>PROTEIN SEQUENCE OF 21-32</scope>
    <source>
        <strain>K12 / EMG2</strain>
    </source>
</reference>
<keyword id="KW-0002">3D-structure</keyword>
<keyword id="KW-0903">Direct protein sequencing</keyword>
<keyword id="KW-0574">Periplasm</keyword>
<keyword id="KW-1185">Reference proteome</keyword>
<keyword id="KW-0732">Signal</keyword>
<proteinExistence type="evidence at protein level"/>
<protein>
    <recommendedName>
        <fullName>Protein YgiW</fullName>
    </recommendedName>
</protein>
<gene>
    <name type="primary">ygiW</name>
    <name type="ordered locus">b3024</name>
    <name type="ordered locus">JW2992</name>
</gene>
<evidence type="ECO:0000256" key="1">
    <source>
        <dbReference type="SAM" id="MobiDB-lite"/>
    </source>
</evidence>
<evidence type="ECO:0000269" key="2">
    <source>
    </source>
</evidence>
<evidence type="ECO:0000305" key="3"/>
<evidence type="ECO:0007829" key="4">
    <source>
        <dbReference type="PDB" id="1NNX"/>
    </source>
</evidence>
<organism>
    <name type="scientific">Escherichia coli (strain K12)</name>
    <dbReference type="NCBI Taxonomy" id="83333"/>
    <lineage>
        <taxon>Bacteria</taxon>
        <taxon>Pseudomonadati</taxon>
        <taxon>Pseudomonadota</taxon>
        <taxon>Gammaproteobacteria</taxon>
        <taxon>Enterobacterales</taxon>
        <taxon>Enterobacteriaceae</taxon>
        <taxon>Escherichia</taxon>
    </lineage>
</organism>